<sequence>MAINIIVAGPRGRMGYEAVQMITKEDSFRLVACLDHKHDGLNLGELEQFSDDLQVPIYTDIDSCLKQHQADVFVDLTTPEVGYKHTKTALEYKVRPVVGTTGFTDEQLSELKELSKQQQRGCIIAPNFAIGAVLMMKFSKMAAKYFPNVEIIEKHHDQKLDAPSGTAKKTAELIQDVRESQKQGHPKEEETLPGARGADMDGMRIHSMRLPGLVAHQEVIFGGAGQTLTISHDSMNRASFMDGIRECVNQVMDLEELVYGLENLL</sequence>
<keyword id="KW-0028">Amino-acid biosynthesis</keyword>
<keyword id="KW-0963">Cytoplasm</keyword>
<keyword id="KW-0220">Diaminopimelate biosynthesis</keyword>
<keyword id="KW-0457">Lysine biosynthesis</keyword>
<keyword id="KW-0520">NAD</keyword>
<keyword id="KW-0521">NADP</keyword>
<keyword id="KW-0560">Oxidoreductase</keyword>
<keyword id="KW-1185">Reference proteome</keyword>
<gene>
    <name evidence="1" type="primary">dapB</name>
    <name type="ordered locus">OB1768</name>
</gene>
<organism>
    <name type="scientific">Oceanobacillus iheyensis (strain DSM 14371 / CIP 107618 / JCM 11309 / KCTC 3954 / HTE831)</name>
    <dbReference type="NCBI Taxonomy" id="221109"/>
    <lineage>
        <taxon>Bacteria</taxon>
        <taxon>Bacillati</taxon>
        <taxon>Bacillota</taxon>
        <taxon>Bacilli</taxon>
        <taxon>Bacillales</taxon>
        <taxon>Bacillaceae</taxon>
        <taxon>Oceanobacillus</taxon>
    </lineage>
</organism>
<reference key="1">
    <citation type="journal article" date="2002" name="Nucleic Acids Res.">
        <title>Genome sequence of Oceanobacillus iheyensis isolated from the Iheya Ridge and its unexpected adaptive capabilities to extreme environments.</title>
        <authorList>
            <person name="Takami H."/>
            <person name="Takaki Y."/>
            <person name="Uchiyama I."/>
        </authorList>
    </citation>
    <scope>NUCLEOTIDE SEQUENCE [LARGE SCALE GENOMIC DNA]</scope>
    <source>
        <strain>DSM 14371 / CIP 107618 / JCM 11309 / KCTC 3954 / HTE831</strain>
    </source>
</reference>
<dbReference type="EC" id="1.17.1.8" evidence="1"/>
<dbReference type="EMBL" id="BA000028">
    <property type="protein sequence ID" value="BAC13724.1"/>
    <property type="molecule type" value="Genomic_DNA"/>
</dbReference>
<dbReference type="RefSeq" id="WP_011066167.1">
    <property type="nucleotide sequence ID" value="NC_004193.1"/>
</dbReference>
<dbReference type="SMR" id="Q8EQD3"/>
<dbReference type="STRING" id="221109.gene:10734008"/>
<dbReference type="KEGG" id="oih:OB1768"/>
<dbReference type="eggNOG" id="COG0289">
    <property type="taxonomic scope" value="Bacteria"/>
</dbReference>
<dbReference type="HOGENOM" id="CLU_047479_0_1_9"/>
<dbReference type="OrthoDB" id="9790352at2"/>
<dbReference type="PhylomeDB" id="Q8EQD3"/>
<dbReference type="UniPathway" id="UPA00034">
    <property type="reaction ID" value="UER00018"/>
</dbReference>
<dbReference type="Proteomes" id="UP000000822">
    <property type="component" value="Chromosome"/>
</dbReference>
<dbReference type="GO" id="GO:0005829">
    <property type="term" value="C:cytosol"/>
    <property type="evidence" value="ECO:0007669"/>
    <property type="project" value="TreeGrafter"/>
</dbReference>
<dbReference type="GO" id="GO:0008839">
    <property type="term" value="F:4-hydroxy-tetrahydrodipicolinate reductase"/>
    <property type="evidence" value="ECO:0007669"/>
    <property type="project" value="UniProtKB-EC"/>
</dbReference>
<dbReference type="GO" id="GO:0051287">
    <property type="term" value="F:NAD binding"/>
    <property type="evidence" value="ECO:0007669"/>
    <property type="project" value="UniProtKB-UniRule"/>
</dbReference>
<dbReference type="GO" id="GO:0050661">
    <property type="term" value="F:NADP binding"/>
    <property type="evidence" value="ECO:0007669"/>
    <property type="project" value="UniProtKB-UniRule"/>
</dbReference>
<dbReference type="GO" id="GO:0016726">
    <property type="term" value="F:oxidoreductase activity, acting on CH or CH2 groups, NAD or NADP as acceptor"/>
    <property type="evidence" value="ECO:0007669"/>
    <property type="project" value="UniProtKB-UniRule"/>
</dbReference>
<dbReference type="GO" id="GO:0019877">
    <property type="term" value="P:diaminopimelate biosynthetic process"/>
    <property type="evidence" value="ECO:0007669"/>
    <property type="project" value="UniProtKB-UniRule"/>
</dbReference>
<dbReference type="GO" id="GO:0009089">
    <property type="term" value="P:lysine biosynthetic process via diaminopimelate"/>
    <property type="evidence" value="ECO:0007669"/>
    <property type="project" value="UniProtKB-UniRule"/>
</dbReference>
<dbReference type="CDD" id="cd02274">
    <property type="entry name" value="DHDPR_N"/>
    <property type="match status" value="1"/>
</dbReference>
<dbReference type="FunFam" id="3.30.360.10:FF:000009">
    <property type="entry name" value="4-hydroxy-tetrahydrodipicolinate reductase"/>
    <property type="match status" value="1"/>
</dbReference>
<dbReference type="Gene3D" id="3.30.360.10">
    <property type="entry name" value="Dihydrodipicolinate Reductase, domain 2"/>
    <property type="match status" value="1"/>
</dbReference>
<dbReference type="Gene3D" id="3.40.50.720">
    <property type="entry name" value="NAD(P)-binding Rossmann-like Domain"/>
    <property type="match status" value="1"/>
</dbReference>
<dbReference type="HAMAP" id="MF_00102">
    <property type="entry name" value="DapB"/>
    <property type="match status" value="1"/>
</dbReference>
<dbReference type="InterPro" id="IPR022663">
    <property type="entry name" value="DapB_C"/>
</dbReference>
<dbReference type="InterPro" id="IPR000846">
    <property type="entry name" value="DapB_N"/>
</dbReference>
<dbReference type="InterPro" id="IPR022664">
    <property type="entry name" value="DapB_N_CS"/>
</dbReference>
<dbReference type="InterPro" id="IPR023940">
    <property type="entry name" value="DHDPR_bac"/>
</dbReference>
<dbReference type="InterPro" id="IPR036291">
    <property type="entry name" value="NAD(P)-bd_dom_sf"/>
</dbReference>
<dbReference type="NCBIfam" id="TIGR00036">
    <property type="entry name" value="dapB"/>
    <property type="match status" value="1"/>
</dbReference>
<dbReference type="PANTHER" id="PTHR20836:SF0">
    <property type="entry name" value="4-HYDROXY-TETRAHYDRODIPICOLINATE REDUCTASE 1, CHLOROPLASTIC-RELATED"/>
    <property type="match status" value="1"/>
</dbReference>
<dbReference type="PANTHER" id="PTHR20836">
    <property type="entry name" value="DIHYDRODIPICOLINATE REDUCTASE"/>
    <property type="match status" value="1"/>
</dbReference>
<dbReference type="Pfam" id="PF05173">
    <property type="entry name" value="DapB_C"/>
    <property type="match status" value="1"/>
</dbReference>
<dbReference type="Pfam" id="PF01113">
    <property type="entry name" value="DapB_N"/>
    <property type="match status" value="1"/>
</dbReference>
<dbReference type="PIRSF" id="PIRSF000161">
    <property type="entry name" value="DHPR"/>
    <property type="match status" value="1"/>
</dbReference>
<dbReference type="SUPFAM" id="SSF55347">
    <property type="entry name" value="Glyceraldehyde-3-phosphate dehydrogenase-like, C-terminal domain"/>
    <property type="match status" value="1"/>
</dbReference>
<dbReference type="SUPFAM" id="SSF51735">
    <property type="entry name" value="NAD(P)-binding Rossmann-fold domains"/>
    <property type="match status" value="1"/>
</dbReference>
<dbReference type="PROSITE" id="PS01298">
    <property type="entry name" value="DAPB"/>
    <property type="match status" value="1"/>
</dbReference>
<feature type="chain" id="PRO_0000141462" description="4-hydroxy-tetrahydrodipicolinate reductase">
    <location>
        <begin position="1"/>
        <end position="265"/>
    </location>
</feature>
<feature type="region of interest" description="Disordered" evidence="2">
    <location>
        <begin position="178"/>
        <end position="200"/>
    </location>
</feature>
<feature type="compositionally biased region" description="Basic and acidic residues" evidence="2">
    <location>
        <begin position="178"/>
        <end position="190"/>
    </location>
</feature>
<feature type="active site" description="Proton donor/acceptor" evidence="1">
    <location>
        <position position="155"/>
    </location>
</feature>
<feature type="active site" description="Proton donor" evidence="1">
    <location>
        <position position="159"/>
    </location>
</feature>
<feature type="binding site" evidence="1">
    <location>
        <begin position="9"/>
        <end position="14"/>
    </location>
    <ligand>
        <name>NAD(+)</name>
        <dbReference type="ChEBI" id="CHEBI:57540"/>
    </ligand>
</feature>
<feature type="binding site" evidence="1">
    <location>
        <position position="37"/>
    </location>
    <ligand>
        <name>NADP(+)</name>
        <dbReference type="ChEBI" id="CHEBI:58349"/>
    </ligand>
</feature>
<feature type="binding site" evidence="1">
    <location>
        <begin position="99"/>
        <end position="101"/>
    </location>
    <ligand>
        <name>NAD(+)</name>
        <dbReference type="ChEBI" id="CHEBI:57540"/>
    </ligand>
</feature>
<feature type="binding site" evidence="1">
    <location>
        <begin position="125"/>
        <end position="128"/>
    </location>
    <ligand>
        <name>NAD(+)</name>
        <dbReference type="ChEBI" id="CHEBI:57540"/>
    </ligand>
</feature>
<feature type="binding site" evidence="1">
    <location>
        <position position="156"/>
    </location>
    <ligand>
        <name>(S)-2,3,4,5-tetrahydrodipicolinate</name>
        <dbReference type="ChEBI" id="CHEBI:16845"/>
    </ligand>
</feature>
<feature type="binding site" evidence="1">
    <location>
        <begin position="165"/>
        <end position="166"/>
    </location>
    <ligand>
        <name>(S)-2,3,4,5-tetrahydrodipicolinate</name>
        <dbReference type="ChEBI" id="CHEBI:16845"/>
    </ligand>
</feature>
<evidence type="ECO:0000255" key="1">
    <source>
        <dbReference type="HAMAP-Rule" id="MF_00102"/>
    </source>
</evidence>
<evidence type="ECO:0000256" key="2">
    <source>
        <dbReference type="SAM" id="MobiDB-lite"/>
    </source>
</evidence>
<evidence type="ECO:0000305" key="3"/>
<protein>
    <recommendedName>
        <fullName evidence="1">4-hydroxy-tetrahydrodipicolinate reductase</fullName>
        <shortName evidence="1">HTPA reductase</shortName>
        <ecNumber evidence="1">1.17.1.8</ecNumber>
    </recommendedName>
</protein>
<name>DAPB_OCEIH</name>
<accession>Q8EQD3</accession>
<comment type="function">
    <text evidence="1">Catalyzes the conversion of 4-hydroxy-tetrahydrodipicolinate (HTPA) to tetrahydrodipicolinate.</text>
</comment>
<comment type="catalytic activity">
    <reaction evidence="1">
        <text>(S)-2,3,4,5-tetrahydrodipicolinate + NAD(+) + H2O = (2S,4S)-4-hydroxy-2,3,4,5-tetrahydrodipicolinate + NADH + H(+)</text>
        <dbReference type="Rhea" id="RHEA:35323"/>
        <dbReference type="ChEBI" id="CHEBI:15377"/>
        <dbReference type="ChEBI" id="CHEBI:15378"/>
        <dbReference type="ChEBI" id="CHEBI:16845"/>
        <dbReference type="ChEBI" id="CHEBI:57540"/>
        <dbReference type="ChEBI" id="CHEBI:57945"/>
        <dbReference type="ChEBI" id="CHEBI:67139"/>
        <dbReference type="EC" id="1.17.1.8"/>
    </reaction>
</comment>
<comment type="catalytic activity">
    <reaction evidence="1">
        <text>(S)-2,3,4,5-tetrahydrodipicolinate + NADP(+) + H2O = (2S,4S)-4-hydroxy-2,3,4,5-tetrahydrodipicolinate + NADPH + H(+)</text>
        <dbReference type="Rhea" id="RHEA:35331"/>
        <dbReference type="ChEBI" id="CHEBI:15377"/>
        <dbReference type="ChEBI" id="CHEBI:15378"/>
        <dbReference type="ChEBI" id="CHEBI:16845"/>
        <dbReference type="ChEBI" id="CHEBI:57783"/>
        <dbReference type="ChEBI" id="CHEBI:58349"/>
        <dbReference type="ChEBI" id="CHEBI:67139"/>
        <dbReference type="EC" id="1.17.1.8"/>
    </reaction>
</comment>
<comment type="pathway">
    <text evidence="1">Amino-acid biosynthesis; L-lysine biosynthesis via DAP pathway; (S)-tetrahydrodipicolinate from L-aspartate: step 4/4.</text>
</comment>
<comment type="subcellular location">
    <subcellularLocation>
        <location evidence="1">Cytoplasm</location>
    </subcellularLocation>
</comment>
<comment type="similarity">
    <text evidence="1">Belongs to the DapB family.</text>
</comment>
<comment type="caution">
    <text evidence="3">Was originally thought to be a dihydrodipicolinate reductase (DHDPR), catalyzing the conversion of dihydrodipicolinate to tetrahydrodipicolinate. However, it was shown in E.coli that the substrate of the enzymatic reaction is not dihydrodipicolinate (DHDP) but in fact (2S,4S)-4-hydroxy-2,3,4,5-tetrahydrodipicolinic acid (HTPA), the product released by the DapA-catalyzed reaction.</text>
</comment>
<proteinExistence type="inferred from homology"/>